<proteinExistence type="inferred from homology"/>
<feature type="chain" id="PRO_0000233601" description="Small ribosomal subunit protein uS17">
    <location>
        <begin position="1"/>
        <end position="86"/>
    </location>
</feature>
<comment type="function">
    <text evidence="1">One of the primary rRNA binding proteins, it binds specifically to the 5'-end of 16S ribosomal RNA.</text>
</comment>
<comment type="subunit">
    <text evidence="1">Part of the 30S ribosomal subunit.</text>
</comment>
<comment type="similarity">
    <text evidence="1">Belongs to the universal ribosomal protein uS17 family.</text>
</comment>
<name>RS17_TROWT</name>
<keyword id="KW-1185">Reference proteome</keyword>
<keyword id="KW-0687">Ribonucleoprotein</keyword>
<keyword id="KW-0689">Ribosomal protein</keyword>
<keyword id="KW-0694">RNA-binding</keyword>
<keyword id="KW-0699">rRNA-binding</keyword>
<organism>
    <name type="scientific">Tropheryma whipplei (strain Twist)</name>
    <name type="common">Whipple's bacillus</name>
    <dbReference type="NCBI Taxonomy" id="203267"/>
    <lineage>
        <taxon>Bacteria</taxon>
        <taxon>Bacillati</taxon>
        <taxon>Actinomycetota</taxon>
        <taxon>Actinomycetes</taxon>
        <taxon>Micrococcales</taxon>
        <taxon>Tropherymataceae</taxon>
        <taxon>Tropheryma</taxon>
    </lineage>
</organism>
<gene>
    <name evidence="1" type="primary">rpsQ</name>
    <name type="ordered locus">TWT_545</name>
</gene>
<reference key="1">
    <citation type="journal article" date="2003" name="Genome Res.">
        <title>Tropheryma whipplei twist: a human pathogenic Actinobacteria with a reduced genome.</title>
        <authorList>
            <person name="Raoult D."/>
            <person name="Ogata H."/>
            <person name="Audic S."/>
            <person name="Robert C."/>
            <person name="Suhre K."/>
            <person name="Drancourt M."/>
            <person name="Claverie J.-M."/>
        </authorList>
    </citation>
    <scope>NUCLEOTIDE SEQUENCE [LARGE SCALE GENOMIC DNA]</scope>
    <source>
        <strain>Twist</strain>
    </source>
</reference>
<protein>
    <recommendedName>
        <fullName evidence="1">Small ribosomal subunit protein uS17</fullName>
    </recommendedName>
    <alternativeName>
        <fullName evidence="2">30S ribosomal protein S17</fullName>
    </alternativeName>
</protein>
<accession>Q83FZ5</accession>
<sequence>MSQQRGYRKSRRGYVTSNSMDKTIVVKIEDRVKHALYGKVIRKTSKVKAHDQGSIAGVGDLVLISETRPISATKRWRLVQILEKAK</sequence>
<evidence type="ECO:0000255" key="1">
    <source>
        <dbReference type="HAMAP-Rule" id="MF_01345"/>
    </source>
</evidence>
<evidence type="ECO:0000305" key="2"/>
<dbReference type="EMBL" id="AE014184">
    <property type="protein sequence ID" value="AAO44642.1"/>
    <property type="molecule type" value="Genomic_DNA"/>
</dbReference>
<dbReference type="RefSeq" id="WP_011096174.1">
    <property type="nucleotide sequence ID" value="NC_004572.3"/>
</dbReference>
<dbReference type="SMR" id="Q83FZ5"/>
<dbReference type="STRING" id="203267.TWT_545"/>
<dbReference type="GeneID" id="67387992"/>
<dbReference type="KEGG" id="twh:TWT_545"/>
<dbReference type="eggNOG" id="COG0186">
    <property type="taxonomic scope" value="Bacteria"/>
</dbReference>
<dbReference type="HOGENOM" id="CLU_073626_1_0_11"/>
<dbReference type="OrthoDB" id="9811714at2"/>
<dbReference type="Proteomes" id="UP000002200">
    <property type="component" value="Chromosome"/>
</dbReference>
<dbReference type="GO" id="GO:0022627">
    <property type="term" value="C:cytosolic small ribosomal subunit"/>
    <property type="evidence" value="ECO:0007669"/>
    <property type="project" value="TreeGrafter"/>
</dbReference>
<dbReference type="GO" id="GO:0019843">
    <property type="term" value="F:rRNA binding"/>
    <property type="evidence" value="ECO:0007669"/>
    <property type="project" value="UniProtKB-UniRule"/>
</dbReference>
<dbReference type="GO" id="GO:0003735">
    <property type="term" value="F:structural constituent of ribosome"/>
    <property type="evidence" value="ECO:0007669"/>
    <property type="project" value="InterPro"/>
</dbReference>
<dbReference type="GO" id="GO:0006412">
    <property type="term" value="P:translation"/>
    <property type="evidence" value="ECO:0007669"/>
    <property type="project" value="UniProtKB-UniRule"/>
</dbReference>
<dbReference type="CDD" id="cd00364">
    <property type="entry name" value="Ribosomal_uS17"/>
    <property type="match status" value="1"/>
</dbReference>
<dbReference type="Gene3D" id="2.40.50.140">
    <property type="entry name" value="Nucleic acid-binding proteins"/>
    <property type="match status" value="1"/>
</dbReference>
<dbReference type="HAMAP" id="MF_01345_B">
    <property type="entry name" value="Ribosomal_uS17_B"/>
    <property type="match status" value="1"/>
</dbReference>
<dbReference type="InterPro" id="IPR012340">
    <property type="entry name" value="NA-bd_OB-fold"/>
</dbReference>
<dbReference type="InterPro" id="IPR000266">
    <property type="entry name" value="Ribosomal_uS17"/>
</dbReference>
<dbReference type="InterPro" id="IPR019984">
    <property type="entry name" value="Ribosomal_uS17_bact/chlr"/>
</dbReference>
<dbReference type="InterPro" id="IPR019979">
    <property type="entry name" value="Ribosomal_uS17_CS"/>
</dbReference>
<dbReference type="NCBIfam" id="NF004123">
    <property type="entry name" value="PRK05610.1"/>
    <property type="match status" value="1"/>
</dbReference>
<dbReference type="NCBIfam" id="TIGR03635">
    <property type="entry name" value="uS17_bact"/>
    <property type="match status" value="1"/>
</dbReference>
<dbReference type="PANTHER" id="PTHR10744">
    <property type="entry name" value="40S RIBOSOMAL PROTEIN S11 FAMILY MEMBER"/>
    <property type="match status" value="1"/>
</dbReference>
<dbReference type="PANTHER" id="PTHR10744:SF1">
    <property type="entry name" value="SMALL RIBOSOMAL SUBUNIT PROTEIN US17M"/>
    <property type="match status" value="1"/>
</dbReference>
<dbReference type="Pfam" id="PF00366">
    <property type="entry name" value="Ribosomal_S17"/>
    <property type="match status" value="1"/>
</dbReference>
<dbReference type="PRINTS" id="PR00973">
    <property type="entry name" value="RIBOSOMALS17"/>
</dbReference>
<dbReference type="SUPFAM" id="SSF50249">
    <property type="entry name" value="Nucleic acid-binding proteins"/>
    <property type="match status" value="1"/>
</dbReference>
<dbReference type="PROSITE" id="PS00056">
    <property type="entry name" value="RIBOSOMAL_S17"/>
    <property type="match status" value="1"/>
</dbReference>